<organism>
    <name type="scientific">Shewanella sp. (strain ANA-3)</name>
    <dbReference type="NCBI Taxonomy" id="94122"/>
    <lineage>
        <taxon>Bacteria</taxon>
        <taxon>Pseudomonadati</taxon>
        <taxon>Pseudomonadota</taxon>
        <taxon>Gammaproteobacteria</taxon>
        <taxon>Alteromonadales</taxon>
        <taxon>Shewanellaceae</taxon>
        <taxon>Shewanella</taxon>
    </lineage>
</organism>
<feature type="chain" id="PRO_0000280875" description="Enolase">
    <location>
        <begin position="1"/>
        <end position="431"/>
    </location>
</feature>
<feature type="active site" description="Proton donor" evidence="1">
    <location>
        <position position="209"/>
    </location>
</feature>
<feature type="active site" description="Proton acceptor" evidence="1">
    <location>
        <position position="341"/>
    </location>
</feature>
<feature type="binding site" evidence="1">
    <location>
        <position position="167"/>
    </location>
    <ligand>
        <name>(2R)-2-phosphoglycerate</name>
        <dbReference type="ChEBI" id="CHEBI:58289"/>
    </ligand>
</feature>
<feature type="binding site" evidence="1">
    <location>
        <position position="246"/>
    </location>
    <ligand>
        <name>Mg(2+)</name>
        <dbReference type="ChEBI" id="CHEBI:18420"/>
    </ligand>
</feature>
<feature type="binding site" evidence="1">
    <location>
        <position position="289"/>
    </location>
    <ligand>
        <name>Mg(2+)</name>
        <dbReference type="ChEBI" id="CHEBI:18420"/>
    </ligand>
</feature>
<feature type="binding site" evidence="1">
    <location>
        <position position="316"/>
    </location>
    <ligand>
        <name>Mg(2+)</name>
        <dbReference type="ChEBI" id="CHEBI:18420"/>
    </ligand>
</feature>
<feature type="binding site" evidence="1">
    <location>
        <position position="341"/>
    </location>
    <ligand>
        <name>(2R)-2-phosphoglycerate</name>
        <dbReference type="ChEBI" id="CHEBI:58289"/>
    </ligand>
</feature>
<feature type="binding site" evidence="1">
    <location>
        <position position="370"/>
    </location>
    <ligand>
        <name>(2R)-2-phosphoglycerate</name>
        <dbReference type="ChEBI" id="CHEBI:58289"/>
    </ligand>
</feature>
<feature type="binding site" evidence="1">
    <location>
        <position position="371"/>
    </location>
    <ligand>
        <name>(2R)-2-phosphoglycerate</name>
        <dbReference type="ChEBI" id="CHEBI:58289"/>
    </ligand>
</feature>
<feature type="binding site" evidence="1">
    <location>
        <position position="392"/>
    </location>
    <ligand>
        <name>(2R)-2-phosphoglycerate</name>
        <dbReference type="ChEBI" id="CHEBI:58289"/>
    </ligand>
</feature>
<keyword id="KW-0963">Cytoplasm</keyword>
<keyword id="KW-0324">Glycolysis</keyword>
<keyword id="KW-0456">Lyase</keyword>
<keyword id="KW-0460">Magnesium</keyword>
<keyword id="KW-0479">Metal-binding</keyword>
<keyword id="KW-0964">Secreted</keyword>
<evidence type="ECO:0000255" key="1">
    <source>
        <dbReference type="HAMAP-Rule" id="MF_00318"/>
    </source>
</evidence>
<name>ENO_SHESA</name>
<dbReference type="EC" id="4.2.1.11" evidence="1"/>
<dbReference type="EMBL" id="CP000469">
    <property type="protein sequence ID" value="ABK47351.1"/>
    <property type="molecule type" value="Genomic_DNA"/>
</dbReference>
<dbReference type="RefSeq" id="WP_011716218.1">
    <property type="nucleotide sequence ID" value="NC_008577.1"/>
</dbReference>
<dbReference type="SMR" id="A0KU82"/>
<dbReference type="STRING" id="94122.Shewana3_1116"/>
<dbReference type="KEGG" id="shn:Shewana3_1116"/>
<dbReference type="eggNOG" id="COG0148">
    <property type="taxonomic scope" value="Bacteria"/>
</dbReference>
<dbReference type="HOGENOM" id="CLU_031223_2_1_6"/>
<dbReference type="OrthoDB" id="9804716at2"/>
<dbReference type="UniPathway" id="UPA00109">
    <property type="reaction ID" value="UER00187"/>
</dbReference>
<dbReference type="Proteomes" id="UP000002589">
    <property type="component" value="Chromosome"/>
</dbReference>
<dbReference type="GO" id="GO:0009986">
    <property type="term" value="C:cell surface"/>
    <property type="evidence" value="ECO:0007669"/>
    <property type="project" value="UniProtKB-SubCell"/>
</dbReference>
<dbReference type="GO" id="GO:0005576">
    <property type="term" value="C:extracellular region"/>
    <property type="evidence" value="ECO:0007669"/>
    <property type="project" value="UniProtKB-SubCell"/>
</dbReference>
<dbReference type="GO" id="GO:0000015">
    <property type="term" value="C:phosphopyruvate hydratase complex"/>
    <property type="evidence" value="ECO:0007669"/>
    <property type="project" value="InterPro"/>
</dbReference>
<dbReference type="GO" id="GO:0000287">
    <property type="term" value="F:magnesium ion binding"/>
    <property type="evidence" value="ECO:0007669"/>
    <property type="project" value="UniProtKB-UniRule"/>
</dbReference>
<dbReference type="GO" id="GO:0004634">
    <property type="term" value="F:phosphopyruvate hydratase activity"/>
    <property type="evidence" value="ECO:0007669"/>
    <property type="project" value="UniProtKB-UniRule"/>
</dbReference>
<dbReference type="GO" id="GO:0006096">
    <property type="term" value="P:glycolytic process"/>
    <property type="evidence" value="ECO:0007669"/>
    <property type="project" value="UniProtKB-UniRule"/>
</dbReference>
<dbReference type="CDD" id="cd03313">
    <property type="entry name" value="enolase"/>
    <property type="match status" value="1"/>
</dbReference>
<dbReference type="FunFam" id="3.20.20.120:FF:000001">
    <property type="entry name" value="Enolase"/>
    <property type="match status" value="1"/>
</dbReference>
<dbReference type="FunFam" id="3.30.390.10:FF:000001">
    <property type="entry name" value="Enolase"/>
    <property type="match status" value="1"/>
</dbReference>
<dbReference type="Gene3D" id="3.20.20.120">
    <property type="entry name" value="Enolase-like C-terminal domain"/>
    <property type="match status" value="1"/>
</dbReference>
<dbReference type="Gene3D" id="3.30.390.10">
    <property type="entry name" value="Enolase-like, N-terminal domain"/>
    <property type="match status" value="1"/>
</dbReference>
<dbReference type="HAMAP" id="MF_00318">
    <property type="entry name" value="Enolase"/>
    <property type="match status" value="1"/>
</dbReference>
<dbReference type="InterPro" id="IPR000941">
    <property type="entry name" value="Enolase"/>
</dbReference>
<dbReference type="InterPro" id="IPR036849">
    <property type="entry name" value="Enolase-like_C_sf"/>
</dbReference>
<dbReference type="InterPro" id="IPR029017">
    <property type="entry name" value="Enolase-like_N"/>
</dbReference>
<dbReference type="InterPro" id="IPR020810">
    <property type="entry name" value="Enolase_C"/>
</dbReference>
<dbReference type="InterPro" id="IPR020809">
    <property type="entry name" value="Enolase_CS"/>
</dbReference>
<dbReference type="InterPro" id="IPR020811">
    <property type="entry name" value="Enolase_N"/>
</dbReference>
<dbReference type="NCBIfam" id="TIGR01060">
    <property type="entry name" value="eno"/>
    <property type="match status" value="1"/>
</dbReference>
<dbReference type="PANTHER" id="PTHR11902">
    <property type="entry name" value="ENOLASE"/>
    <property type="match status" value="1"/>
</dbReference>
<dbReference type="PANTHER" id="PTHR11902:SF1">
    <property type="entry name" value="ENOLASE"/>
    <property type="match status" value="1"/>
</dbReference>
<dbReference type="Pfam" id="PF00113">
    <property type="entry name" value="Enolase_C"/>
    <property type="match status" value="1"/>
</dbReference>
<dbReference type="Pfam" id="PF03952">
    <property type="entry name" value="Enolase_N"/>
    <property type="match status" value="1"/>
</dbReference>
<dbReference type="PIRSF" id="PIRSF001400">
    <property type="entry name" value="Enolase"/>
    <property type="match status" value="1"/>
</dbReference>
<dbReference type="PRINTS" id="PR00148">
    <property type="entry name" value="ENOLASE"/>
</dbReference>
<dbReference type="SFLD" id="SFLDF00002">
    <property type="entry name" value="enolase"/>
    <property type="match status" value="1"/>
</dbReference>
<dbReference type="SFLD" id="SFLDG00178">
    <property type="entry name" value="enolase"/>
    <property type="match status" value="1"/>
</dbReference>
<dbReference type="SMART" id="SM01192">
    <property type="entry name" value="Enolase_C"/>
    <property type="match status" value="1"/>
</dbReference>
<dbReference type="SMART" id="SM01193">
    <property type="entry name" value="Enolase_N"/>
    <property type="match status" value="1"/>
</dbReference>
<dbReference type="SUPFAM" id="SSF51604">
    <property type="entry name" value="Enolase C-terminal domain-like"/>
    <property type="match status" value="1"/>
</dbReference>
<dbReference type="SUPFAM" id="SSF54826">
    <property type="entry name" value="Enolase N-terminal domain-like"/>
    <property type="match status" value="1"/>
</dbReference>
<dbReference type="PROSITE" id="PS00164">
    <property type="entry name" value="ENOLASE"/>
    <property type="match status" value="1"/>
</dbReference>
<reference key="1">
    <citation type="submission" date="2006-09" db="EMBL/GenBank/DDBJ databases">
        <title>Complete sequence of chromosome 1 of Shewanella sp. ANA-3.</title>
        <authorList>
            <person name="Copeland A."/>
            <person name="Lucas S."/>
            <person name="Lapidus A."/>
            <person name="Barry K."/>
            <person name="Detter J.C."/>
            <person name="Glavina del Rio T."/>
            <person name="Hammon N."/>
            <person name="Israni S."/>
            <person name="Dalin E."/>
            <person name="Tice H."/>
            <person name="Pitluck S."/>
            <person name="Chertkov O."/>
            <person name="Brettin T."/>
            <person name="Bruce D."/>
            <person name="Han C."/>
            <person name="Tapia R."/>
            <person name="Gilna P."/>
            <person name="Schmutz J."/>
            <person name="Larimer F."/>
            <person name="Land M."/>
            <person name="Hauser L."/>
            <person name="Kyrpides N."/>
            <person name="Kim E."/>
            <person name="Newman D."/>
            <person name="Salticov C."/>
            <person name="Konstantinidis K."/>
            <person name="Klappenback J."/>
            <person name="Tiedje J."/>
            <person name="Richardson P."/>
        </authorList>
    </citation>
    <scope>NUCLEOTIDE SEQUENCE [LARGE SCALE GENOMIC DNA]</scope>
    <source>
        <strain>ANA-3</strain>
    </source>
</reference>
<comment type="function">
    <text evidence="1">Catalyzes the reversible conversion of 2-phosphoglycerate (2-PG) into phosphoenolpyruvate (PEP). It is essential for the degradation of carbohydrates via glycolysis.</text>
</comment>
<comment type="catalytic activity">
    <reaction evidence="1">
        <text>(2R)-2-phosphoglycerate = phosphoenolpyruvate + H2O</text>
        <dbReference type="Rhea" id="RHEA:10164"/>
        <dbReference type="ChEBI" id="CHEBI:15377"/>
        <dbReference type="ChEBI" id="CHEBI:58289"/>
        <dbReference type="ChEBI" id="CHEBI:58702"/>
        <dbReference type="EC" id="4.2.1.11"/>
    </reaction>
</comment>
<comment type="cofactor">
    <cofactor evidence="1">
        <name>Mg(2+)</name>
        <dbReference type="ChEBI" id="CHEBI:18420"/>
    </cofactor>
    <text evidence="1">Binds a second Mg(2+) ion via substrate during catalysis.</text>
</comment>
<comment type="pathway">
    <text evidence="1">Carbohydrate degradation; glycolysis; pyruvate from D-glyceraldehyde 3-phosphate: step 4/5.</text>
</comment>
<comment type="subunit">
    <text evidence="1">Component of the RNA degradosome, a multiprotein complex involved in RNA processing and mRNA degradation.</text>
</comment>
<comment type="subcellular location">
    <subcellularLocation>
        <location evidence="1">Cytoplasm</location>
    </subcellularLocation>
    <subcellularLocation>
        <location evidence="1">Secreted</location>
    </subcellularLocation>
    <subcellularLocation>
        <location evidence="1">Cell surface</location>
    </subcellularLocation>
    <text evidence="1">Fractions of enolase are present in both the cytoplasm and on the cell surface.</text>
</comment>
<comment type="similarity">
    <text evidence="1">Belongs to the enolase family.</text>
</comment>
<accession>A0KU82</accession>
<gene>
    <name evidence="1" type="primary">eno</name>
    <name type="ordered locus">Shewana3_1116</name>
</gene>
<protein>
    <recommendedName>
        <fullName evidence="1">Enolase</fullName>
        <ecNumber evidence="1">4.2.1.11</ecNumber>
    </recommendedName>
    <alternativeName>
        <fullName evidence="1">2-phospho-D-glycerate hydro-lyase</fullName>
    </alternativeName>
    <alternativeName>
        <fullName evidence="1">2-phosphoglycerate dehydratase</fullName>
    </alternativeName>
</protein>
<sequence>MAKIINVIGREIMDSRGNPTVEAEVHLEGGFIGMAAAPSGASTGSREALELRDGDKSRYLGKGVLTAVANVNGPIRAALIGKDATAQAELDQIMIDLDGTENKDKLGANAILAVSLAAAKAAAAFKGMPLYAHIAELNGTPGQYAMPVPMMNILNGGEHADNNVDIQEFMVQPVGAKNFREALRMGAEIFHTLKKVLHGKGLSTSVGDEGGFAPNLSSNADALAVIKEAVELAGYKLGTDVTLALDCAASEFYKDGKYDLSGEGKVFDSNGFSDFLKSLTEQYPIVSIEDGLDESDWDGWAYQTKIMGDKIQLVGDDLFVTNTKILTRGIENGIANSILIKFNQIGSLTETLAAIRMAKAAGYTAVISHRSGETEDSTIADLAVGTAAGQIKTGSLCRSDRVAKYNQLLRIEEQLGEKAPYRGLKEIKGQA</sequence>
<proteinExistence type="inferred from homology"/>